<keyword id="KW-0963">Cytoplasm</keyword>
<keyword id="KW-0690">Ribosome biogenesis</keyword>
<comment type="function">
    <text evidence="1">One of several proteins that assist in the late maturation steps of the functional core of the 30S ribosomal subunit. Associates with free 30S ribosomal subunits (but not with 30S subunits that are part of 70S ribosomes or polysomes). Required for efficient processing of 16S rRNA. May interact with the 5'-terminal helix region of 16S rRNA.</text>
</comment>
<comment type="subunit">
    <text evidence="1">Monomer. Binds 30S ribosomal subunits, but not 50S ribosomal subunits or 70S ribosomes.</text>
</comment>
<comment type="subcellular location">
    <subcellularLocation>
        <location evidence="1">Cytoplasm</location>
    </subcellularLocation>
</comment>
<comment type="similarity">
    <text evidence="1">Belongs to the RbfA family.</text>
</comment>
<organism>
    <name type="scientific">Alteromonas mediterranea (strain DSM 17117 / CIP 110805 / LMG 28347 / Deep ecotype)</name>
    <dbReference type="NCBI Taxonomy" id="1774373"/>
    <lineage>
        <taxon>Bacteria</taxon>
        <taxon>Pseudomonadati</taxon>
        <taxon>Pseudomonadota</taxon>
        <taxon>Gammaproteobacteria</taxon>
        <taxon>Alteromonadales</taxon>
        <taxon>Alteromonadaceae</taxon>
        <taxon>Alteromonas/Salinimonas group</taxon>
        <taxon>Alteromonas</taxon>
    </lineage>
</organism>
<feature type="chain" id="PRO_1000088855" description="Ribosome-binding factor A">
    <location>
        <begin position="1"/>
        <end position="133"/>
    </location>
</feature>
<name>RBFA_ALTMD</name>
<sequence>MAREFSRTDRVAQQVHKEVASILQNEYKHRVGDMPLITVSDVDVSRDLAHAKIFVTIYNSTEEEGKVQIKQLAEYKKFIRSILAKRLRMRSVPDLHFFEDKSIIEGMRISNLVSQTIAKDESKRDQDDSQEQE</sequence>
<accession>B4RXT9</accession>
<accession>F2GAC9</accession>
<dbReference type="EMBL" id="CP001103">
    <property type="protein sequence ID" value="AEA97923.1"/>
    <property type="molecule type" value="Genomic_DNA"/>
</dbReference>
<dbReference type="RefSeq" id="WP_012518254.1">
    <property type="nucleotide sequence ID" value="NC_011138.3"/>
</dbReference>
<dbReference type="SMR" id="B4RXT9"/>
<dbReference type="GeneID" id="56342193"/>
<dbReference type="KEGG" id="amc:MADE_1008925"/>
<dbReference type="HOGENOM" id="CLU_089475_5_0_6"/>
<dbReference type="Proteomes" id="UP000001870">
    <property type="component" value="Chromosome"/>
</dbReference>
<dbReference type="GO" id="GO:0005829">
    <property type="term" value="C:cytosol"/>
    <property type="evidence" value="ECO:0007669"/>
    <property type="project" value="TreeGrafter"/>
</dbReference>
<dbReference type="GO" id="GO:0043024">
    <property type="term" value="F:ribosomal small subunit binding"/>
    <property type="evidence" value="ECO:0007669"/>
    <property type="project" value="TreeGrafter"/>
</dbReference>
<dbReference type="GO" id="GO:0030490">
    <property type="term" value="P:maturation of SSU-rRNA"/>
    <property type="evidence" value="ECO:0007669"/>
    <property type="project" value="UniProtKB-UniRule"/>
</dbReference>
<dbReference type="Gene3D" id="3.30.300.20">
    <property type="match status" value="1"/>
</dbReference>
<dbReference type="HAMAP" id="MF_00003">
    <property type="entry name" value="RbfA"/>
    <property type="match status" value="1"/>
</dbReference>
<dbReference type="InterPro" id="IPR015946">
    <property type="entry name" value="KH_dom-like_a/b"/>
</dbReference>
<dbReference type="InterPro" id="IPR000238">
    <property type="entry name" value="RbfA"/>
</dbReference>
<dbReference type="InterPro" id="IPR023799">
    <property type="entry name" value="RbfA_dom_sf"/>
</dbReference>
<dbReference type="InterPro" id="IPR020053">
    <property type="entry name" value="Ribosome-bd_factorA_CS"/>
</dbReference>
<dbReference type="NCBIfam" id="TIGR00082">
    <property type="entry name" value="rbfA"/>
    <property type="match status" value="1"/>
</dbReference>
<dbReference type="PANTHER" id="PTHR33515">
    <property type="entry name" value="RIBOSOME-BINDING FACTOR A, CHLOROPLASTIC-RELATED"/>
    <property type="match status" value="1"/>
</dbReference>
<dbReference type="PANTHER" id="PTHR33515:SF1">
    <property type="entry name" value="RIBOSOME-BINDING FACTOR A, CHLOROPLASTIC-RELATED"/>
    <property type="match status" value="1"/>
</dbReference>
<dbReference type="Pfam" id="PF02033">
    <property type="entry name" value="RBFA"/>
    <property type="match status" value="1"/>
</dbReference>
<dbReference type="SUPFAM" id="SSF89919">
    <property type="entry name" value="Ribosome-binding factor A, RbfA"/>
    <property type="match status" value="1"/>
</dbReference>
<dbReference type="PROSITE" id="PS01319">
    <property type="entry name" value="RBFA"/>
    <property type="match status" value="1"/>
</dbReference>
<evidence type="ECO:0000255" key="1">
    <source>
        <dbReference type="HAMAP-Rule" id="MF_00003"/>
    </source>
</evidence>
<proteinExistence type="inferred from homology"/>
<reference key="1">
    <citation type="journal article" date="2008" name="ISME J.">
        <title>Comparative genomics of two ecotypes of the marine planktonic copiotroph Alteromonas macleodii suggests alternative lifestyles associated with different kinds of particulate organic matter.</title>
        <authorList>
            <person name="Ivars-Martinez E."/>
            <person name="Martin-Cuadrado A.-B."/>
            <person name="D'Auria G."/>
            <person name="Mira A."/>
            <person name="Ferriera S."/>
            <person name="Johnson J."/>
            <person name="Friedman R."/>
            <person name="Rodriguez-Valera F."/>
        </authorList>
    </citation>
    <scope>NUCLEOTIDE SEQUENCE [LARGE SCALE GENOMIC DNA]</scope>
    <source>
        <strain>DSM 17117 / CIP 110805 / LMG 28347 / Deep ecotype</strain>
    </source>
</reference>
<protein>
    <recommendedName>
        <fullName evidence="1">Ribosome-binding factor A</fullName>
    </recommendedName>
</protein>
<gene>
    <name evidence="1" type="primary">rbfA</name>
    <name type="ordered locus">MADE_1008925</name>
</gene>